<reference key="1">
    <citation type="submission" date="2006-12" db="EMBL/GenBank/DDBJ databases">
        <authorList>
            <person name="Fouts D.E."/>
            <person name="Nelson K.E."/>
            <person name="Sebastian Y."/>
        </authorList>
    </citation>
    <scope>NUCLEOTIDE SEQUENCE [LARGE SCALE GENOMIC DNA]</scope>
    <source>
        <strain>81-176</strain>
    </source>
</reference>
<comment type="function">
    <text evidence="1">DNA-dependent RNA polymerase catalyzes the transcription of DNA into RNA using the four ribonucleoside triphosphates as substrates.</text>
</comment>
<comment type="catalytic activity">
    <reaction evidence="1">
        <text>RNA(n) + a ribonucleoside 5'-triphosphate = RNA(n+1) + diphosphate</text>
        <dbReference type="Rhea" id="RHEA:21248"/>
        <dbReference type="Rhea" id="RHEA-COMP:14527"/>
        <dbReference type="Rhea" id="RHEA-COMP:17342"/>
        <dbReference type="ChEBI" id="CHEBI:33019"/>
        <dbReference type="ChEBI" id="CHEBI:61557"/>
        <dbReference type="ChEBI" id="CHEBI:140395"/>
        <dbReference type="EC" id="2.7.7.6"/>
    </reaction>
</comment>
<comment type="subunit">
    <text evidence="1">The RNAP catalytic core consists of 2 alpha, 1 beta, 1 beta' and 1 omega subunit. When a sigma factor is associated with the core the holoenzyme is formed, which can initiate transcription.</text>
</comment>
<comment type="similarity">
    <text evidence="1">Belongs to the RNA polymerase beta chain family.</text>
</comment>
<sequence>MCDMLDNKLGNRLRVDFSNISKQIEIPNLLQLQKKSFDYFLNLDNGESGIEKVFKSIFPIHDPQNRLSLEYVSSEIGKPKYTIRECMERGLTYSVNLKMKIRLTLHEKDEKTGEKVGVKDIKEQEIYIREIPLMTDRVSFIINGVERVVVNQLHRSPGVIFKEEESSTVANKLVYTAQIIPDRGSWLYFEYDAKDVLYVRINKRRKVPVTMLFRALGYKKQDIIKLFYPIQTIHVKKDKFLTEFNPNDFMDRIEYDIKDEKGKIVHQAGKRLTKKKAEQLIKDGLKWIEYPVEILLNRYLANPIIDKESGEVLFDSLTLLDESKLAKIKEQKSFDIANDLANGVDAAIINSFAQDGETLKLLKQSENIDDENDLAAIRIYKVMRPGEPVVKDAAKAFVNDLFFNPERYDLTKVGRMKMNHKLGLEVPEYVTVLTNEDIIKTAKYLIKVKNGKGHIDDRDHLGNRRIRSIGELLANELHLGLAKMQKAIRDKFTSLNADLDKVMPYDLINPKMITTTIIEFFTGGQLSQFMDQTNPLSEVTHKRRLSALGEGGLVKERAGFEVRDVHATHYGRICPVETPEGQNIGLINTLSTYAKVNELGFVEAPYRKVVNGKVTNEVVYLTATQEEGLFIAPASTKVDAKGNIVEEFVEARQDGETILARREEVQLIDLCSGMVVGVAASLIPFLEHDDANRALMGSNMQRQAVPLLTASAPIVGTGMEQIIARDAWEAVKAKRGGVVEKVDNKSIFILGEDDKGPFIDHYTMEKNLRTNQNTNYIQHPIVKKGDIVKAGQIIADGPSMDQGELAIGKNALIAFMPWNGYNYEDAIVVSERIIREDTFTSVHIYEKEIEARELKDGIEEITKDIPNVKEEDVAHLDESGIAKIGTHIKPGMILVGKVSPKGEVKPTPEERLLRAIFGEKAGHVVNKSLYATASLEGVVVDVKIFTKKGYEKDDRAIKSYDKEKMALEKEHHDRLLMMDREEMLRVCALLSKAPLNSDQKIGDKNYKKGQTADISELEKINRFTLTTLIKAYSKEIQKEYDDLKNHFQNEKKKLKAEHDEKLEILEKDDILPSGVIKLVKVYIATKRKLKVGDKMAGRHGNKGIVSTIVPEVDMPYLPNGKSVDIALNPLGVPSRMNIGQILESHLGLIGLRLGDQIQEIFDRRQKDFLKELRAKMLEICSIPRLASEKEFIKSLSDEELLNYARDWSKGVKFATPVFEGVNIEEFSKLFEMAKIDMDGKTELYDGRTGEKIAERVHVGCMYMLKLHHLVDEKVHARSTGPYSLVTQQPVGGKALFGGQRFGEMEVWALEAYGAAHTLREMLTIKSDDVEGRFSAYKALTKGENVPATGIPETFFVLTNELKSLALDVEIFDKDEDNE</sequence>
<evidence type="ECO:0000255" key="1">
    <source>
        <dbReference type="HAMAP-Rule" id="MF_01321"/>
    </source>
</evidence>
<dbReference type="EC" id="2.7.7.6" evidence="1"/>
<dbReference type="EMBL" id="CP000538">
    <property type="protein sequence ID" value="EAQ73187.2"/>
    <property type="molecule type" value="Genomic_DNA"/>
</dbReference>
<dbReference type="SMR" id="A1VYJ4"/>
<dbReference type="KEGG" id="cjj:CJJ81176_0509"/>
<dbReference type="eggNOG" id="COG0085">
    <property type="taxonomic scope" value="Bacteria"/>
</dbReference>
<dbReference type="HOGENOM" id="CLU_000524_4_3_7"/>
<dbReference type="Proteomes" id="UP000000646">
    <property type="component" value="Chromosome"/>
</dbReference>
<dbReference type="GO" id="GO:0000428">
    <property type="term" value="C:DNA-directed RNA polymerase complex"/>
    <property type="evidence" value="ECO:0007669"/>
    <property type="project" value="UniProtKB-KW"/>
</dbReference>
<dbReference type="GO" id="GO:0003677">
    <property type="term" value="F:DNA binding"/>
    <property type="evidence" value="ECO:0007669"/>
    <property type="project" value="UniProtKB-UniRule"/>
</dbReference>
<dbReference type="GO" id="GO:0003899">
    <property type="term" value="F:DNA-directed RNA polymerase activity"/>
    <property type="evidence" value="ECO:0007669"/>
    <property type="project" value="UniProtKB-UniRule"/>
</dbReference>
<dbReference type="GO" id="GO:0032549">
    <property type="term" value="F:ribonucleoside binding"/>
    <property type="evidence" value="ECO:0007669"/>
    <property type="project" value="InterPro"/>
</dbReference>
<dbReference type="GO" id="GO:0006351">
    <property type="term" value="P:DNA-templated transcription"/>
    <property type="evidence" value="ECO:0007669"/>
    <property type="project" value="UniProtKB-UniRule"/>
</dbReference>
<dbReference type="CDD" id="cd00653">
    <property type="entry name" value="RNA_pol_B_RPB2"/>
    <property type="match status" value="1"/>
</dbReference>
<dbReference type="Gene3D" id="2.40.50.100">
    <property type="match status" value="1"/>
</dbReference>
<dbReference type="Gene3D" id="2.40.50.150">
    <property type="match status" value="1"/>
</dbReference>
<dbReference type="Gene3D" id="3.90.1100.10">
    <property type="match status" value="2"/>
</dbReference>
<dbReference type="Gene3D" id="2.30.150.10">
    <property type="entry name" value="DNA-directed RNA polymerase, beta subunit, external 1 domain"/>
    <property type="match status" value="1"/>
</dbReference>
<dbReference type="Gene3D" id="2.40.270.10">
    <property type="entry name" value="DNA-directed RNA polymerase, subunit 2, domain 6"/>
    <property type="match status" value="1"/>
</dbReference>
<dbReference type="Gene3D" id="3.90.1800.10">
    <property type="entry name" value="RNA polymerase alpha subunit dimerisation domain"/>
    <property type="match status" value="1"/>
</dbReference>
<dbReference type="Gene3D" id="3.90.1110.10">
    <property type="entry name" value="RNA polymerase Rpb2, domain 2"/>
    <property type="match status" value="1"/>
</dbReference>
<dbReference type="HAMAP" id="MF_01321">
    <property type="entry name" value="RNApol_bact_RpoB"/>
    <property type="match status" value="1"/>
</dbReference>
<dbReference type="InterPro" id="IPR042107">
    <property type="entry name" value="DNA-dir_RNA_pol_bsu_ext_1_sf"/>
</dbReference>
<dbReference type="InterPro" id="IPR019462">
    <property type="entry name" value="DNA-dir_RNA_pol_bsu_external_1"/>
</dbReference>
<dbReference type="InterPro" id="IPR015712">
    <property type="entry name" value="DNA-dir_RNA_pol_su2"/>
</dbReference>
<dbReference type="InterPro" id="IPR007120">
    <property type="entry name" value="DNA-dir_RNAP_su2_dom"/>
</dbReference>
<dbReference type="InterPro" id="IPR037033">
    <property type="entry name" value="DNA-dir_RNAP_su2_hyb_sf"/>
</dbReference>
<dbReference type="InterPro" id="IPR010243">
    <property type="entry name" value="RNA_pol_bsu_bac"/>
</dbReference>
<dbReference type="InterPro" id="IPR007121">
    <property type="entry name" value="RNA_pol_bsu_CS"/>
</dbReference>
<dbReference type="InterPro" id="IPR007644">
    <property type="entry name" value="RNA_pol_bsu_protrusion"/>
</dbReference>
<dbReference type="InterPro" id="IPR007642">
    <property type="entry name" value="RNA_pol_Rpb2_2"/>
</dbReference>
<dbReference type="InterPro" id="IPR037034">
    <property type="entry name" value="RNA_pol_Rpb2_2_sf"/>
</dbReference>
<dbReference type="InterPro" id="IPR007645">
    <property type="entry name" value="RNA_pol_Rpb2_3"/>
</dbReference>
<dbReference type="InterPro" id="IPR007641">
    <property type="entry name" value="RNA_pol_Rpb2_7"/>
</dbReference>
<dbReference type="InterPro" id="IPR014724">
    <property type="entry name" value="RNA_pol_RPB2_OB-fold"/>
</dbReference>
<dbReference type="NCBIfam" id="NF001616">
    <property type="entry name" value="PRK00405.1"/>
    <property type="match status" value="1"/>
</dbReference>
<dbReference type="NCBIfam" id="TIGR02013">
    <property type="entry name" value="rpoB"/>
    <property type="match status" value="1"/>
</dbReference>
<dbReference type="PANTHER" id="PTHR20856">
    <property type="entry name" value="DNA-DIRECTED RNA POLYMERASE I SUBUNIT 2"/>
    <property type="match status" value="1"/>
</dbReference>
<dbReference type="Pfam" id="PF04563">
    <property type="entry name" value="RNA_pol_Rpb2_1"/>
    <property type="match status" value="1"/>
</dbReference>
<dbReference type="Pfam" id="PF04561">
    <property type="entry name" value="RNA_pol_Rpb2_2"/>
    <property type="match status" value="2"/>
</dbReference>
<dbReference type="Pfam" id="PF04565">
    <property type="entry name" value="RNA_pol_Rpb2_3"/>
    <property type="match status" value="1"/>
</dbReference>
<dbReference type="Pfam" id="PF10385">
    <property type="entry name" value="RNA_pol_Rpb2_45"/>
    <property type="match status" value="1"/>
</dbReference>
<dbReference type="Pfam" id="PF00562">
    <property type="entry name" value="RNA_pol_Rpb2_6"/>
    <property type="match status" value="1"/>
</dbReference>
<dbReference type="Pfam" id="PF04560">
    <property type="entry name" value="RNA_pol_Rpb2_7"/>
    <property type="match status" value="1"/>
</dbReference>
<dbReference type="SUPFAM" id="SSF64484">
    <property type="entry name" value="beta and beta-prime subunits of DNA dependent RNA-polymerase"/>
    <property type="match status" value="1"/>
</dbReference>
<dbReference type="PROSITE" id="PS01166">
    <property type="entry name" value="RNA_POL_BETA"/>
    <property type="match status" value="1"/>
</dbReference>
<accession>A1VYJ4</accession>
<organism>
    <name type="scientific">Campylobacter jejuni subsp. jejuni serotype O:23/36 (strain 81-176)</name>
    <dbReference type="NCBI Taxonomy" id="354242"/>
    <lineage>
        <taxon>Bacteria</taxon>
        <taxon>Pseudomonadati</taxon>
        <taxon>Campylobacterota</taxon>
        <taxon>Epsilonproteobacteria</taxon>
        <taxon>Campylobacterales</taxon>
        <taxon>Campylobacteraceae</taxon>
        <taxon>Campylobacter</taxon>
    </lineage>
</organism>
<keyword id="KW-0240">DNA-directed RNA polymerase</keyword>
<keyword id="KW-0548">Nucleotidyltransferase</keyword>
<keyword id="KW-0804">Transcription</keyword>
<keyword id="KW-0808">Transferase</keyword>
<gene>
    <name evidence="1" type="primary">rpoB</name>
    <name type="ordered locus">CJJ81176_0509</name>
</gene>
<protein>
    <recommendedName>
        <fullName evidence="1">DNA-directed RNA polymerase subunit beta</fullName>
        <shortName evidence="1">RNAP subunit beta</shortName>
        <ecNumber evidence="1">2.7.7.6</ecNumber>
    </recommendedName>
    <alternativeName>
        <fullName evidence="1">RNA polymerase subunit beta</fullName>
    </alternativeName>
    <alternativeName>
        <fullName evidence="1">Transcriptase subunit beta</fullName>
    </alternativeName>
</protein>
<name>RPOB_CAMJJ</name>
<proteinExistence type="inferred from homology"/>
<feature type="chain" id="PRO_0000300295" description="DNA-directed RNA polymerase subunit beta">
    <location>
        <begin position="1"/>
        <end position="1378"/>
    </location>
</feature>